<keyword id="KW-0539">Nucleus</keyword>
<keyword id="KW-1185">Reference proteome</keyword>
<keyword id="KW-0833">Ubl conjugation pathway</keyword>
<gene>
    <name type="primary">ASK10</name>
    <name type="ordered locus">At3g21860</name>
    <name type="ORF">MSD21.23</name>
</gene>
<dbReference type="EMBL" id="AB025634">
    <property type="protein sequence ID" value="BAB02848.1"/>
    <property type="molecule type" value="Genomic_DNA"/>
</dbReference>
<dbReference type="EMBL" id="CP002686">
    <property type="protein sequence ID" value="AEE76559.1"/>
    <property type="molecule type" value="Genomic_DNA"/>
</dbReference>
<dbReference type="EMBL" id="DQ056602">
    <property type="protein sequence ID" value="AAY78750.1"/>
    <property type="molecule type" value="mRNA"/>
</dbReference>
<dbReference type="RefSeq" id="NP_566695.1">
    <property type="nucleotide sequence ID" value="NM_113081.2"/>
</dbReference>
<dbReference type="SMR" id="Q9LSX8"/>
<dbReference type="BioGRID" id="7072">
    <property type="interactions" value="17"/>
</dbReference>
<dbReference type="ComplexPortal" id="CPX-1437">
    <property type="entry name" value="SCF(COI1) ubiquitin ligase complex, variant CUL1-RBX1A-ASK10"/>
</dbReference>
<dbReference type="ComplexPortal" id="CPX-1458">
    <property type="entry name" value="SCF(COI1) ubiquitin ligase complex, variant CUL1-RBX1B-ASK10"/>
</dbReference>
<dbReference type="ComplexPortal" id="CPX-1480">
    <property type="entry name" value="SCF(COI1) ubiquitin ligase complex, variant CUL2-RBX1A-ASK10"/>
</dbReference>
<dbReference type="ComplexPortal" id="CPX-1503">
    <property type="entry name" value="SCF(COI1) ubiquitin ligase complex, variant CUL2-RBX1B-ASK10"/>
</dbReference>
<dbReference type="ComplexPortal" id="CPX-1523">
    <property type="entry name" value="SCF(TIR1) ubiquitin ligase complex, variant CUL1-RBX1A-ASK10"/>
</dbReference>
<dbReference type="ComplexPortal" id="CPX-1544">
    <property type="entry name" value="SCF(TIR1) ubiquitin ligase complex, variant CUL1-RBX1B-ASK10"/>
</dbReference>
<dbReference type="ComplexPortal" id="CPX-1566">
    <property type="entry name" value="SCF(TIR1) ubiquitin ligase complex, variant CUL2-RBX1A-ASK10"/>
</dbReference>
<dbReference type="ComplexPortal" id="CPX-1587">
    <property type="entry name" value="SCF(TIR1) ubiquitin ligase complex, variant CUL2-RBX1B-ASK10"/>
</dbReference>
<dbReference type="FunCoup" id="Q9LSX8">
    <property type="interactions" value="2541"/>
</dbReference>
<dbReference type="IntAct" id="Q9LSX8">
    <property type="interactions" value="2"/>
</dbReference>
<dbReference type="STRING" id="3702.Q9LSX8"/>
<dbReference type="PaxDb" id="3702-AT3G21860.1"/>
<dbReference type="ProteomicsDB" id="246683"/>
<dbReference type="EnsemblPlants" id="AT3G21860.1">
    <property type="protein sequence ID" value="AT3G21860.1"/>
    <property type="gene ID" value="AT3G21860"/>
</dbReference>
<dbReference type="GeneID" id="821740"/>
<dbReference type="Gramene" id="AT3G21860.1">
    <property type="protein sequence ID" value="AT3G21860.1"/>
    <property type="gene ID" value="AT3G21860"/>
</dbReference>
<dbReference type="KEGG" id="ath:AT3G21860"/>
<dbReference type="Araport" id="AT3G21860"/>
<dbReference type="TAIR" id="AT3G21860">
    <property type="gene designation" value="SK10"/>
</dbReference>
<dbReference type="eggNOG" id="KOG1724">
    <property type="taxonomic scope" value="Eukaryota"/>
</dbReference>
<dbReference type="HOGENOM" id="CLU_059252_6_1_1"/>
<dbReference type="InParanoid" id="Q9LSX8"/>
<dbReference type="OMA" id="CSKHAAN"/>
<dbReference type="PhylomeDB" id="Q9LSX8"/>
<dbReference type="UniPathway" id="UPA00143"/>
<dbReference type="PRO" id="PR:Q9LSX8"/>
<dbReference type="Proteomes" id="UP000006548">
    <property type="component" value="Chromosome 3"/>
</dbReference>
<dbReference type="ExpressionAtlas" id="Q9LSX8">
    <property type="expression patterns" value="baseline and differential"/>
</dbReference>
<dbReference type="GO" id="GO:0005634">
    <property type="term" value="C:nucleus"/>
    <property type="evidence" value="ECO:0007669"/>
    <property type="project" value="UniProtKB-SubCell"/>
</dbReference>
<dbReference type="GO" id="GO:0019005">
    <property type="term" value="C:SCF ubiquitin ligase complex"/>
    <property type="evidence" value="ECO:0000250"/>
    <property type="project" value="TAIR"/>
</dbReference>
<dbReference type="GO" id="GO:0009734">
    <property type="term" value="P:auxin-activated signaling pathway"/>
    <property type="evidence" value="ECO:0000303"/>
    <property type="project" value="ComplexPortal"/>
</dbReference>
<dbReference type="GO" id="GO:0009867">
    <property type="term" value="P:jasmonic acid mediated signaling pathway"/>
    <property type="evidence" value="ECO:0000315"/>
    <property type="project" value="ComplexPortal"/>
</dbReference>
<dbReference type="GO" id="GO:0016567">
    <property type="term" value="P:protein ubiquitination"/>
    <property type="evidence" value="ECO:0007669"/>
    <property type="project" value="UniProtKB-UniPathway"/>
</dbReference>
<dbReference type="GO" id="GO:0009733">
    <property type="term" value="P:response to auxin"/>
    <property type="evidence" value="ECO:0000303"/>
    <property type="project" value="ComplexPortal"/>
</dbReference>
<dbReference type="GO" id="GO:0009753">
    <property type="term" value="P:response to jasmonic acid"/>
    <property type="evidence" value="ECO:0000315"/>
    <property type="project" value="ComplexPortal"/>
</dbReference>
<dbReference type="GO" id="GO:0006511">
    <property type="term" value="P:ubiquitin-dependent protein catabolic process"/>
    <property type="evidence" value="ECO:0000304"/>
    <property type="project" value="TAIR"/>
</dbReference>
<dbReference type="CDD" id="cd18322">
    <property type="entry name" value="BTB_POZ_SKP1"/>
    <property type="match status" value="1"/>
</dbReference>
<dbReference type="FunFam" id="3.30.710.10:FF:000230">
    <property type="entry name" value="SKP1-like protein 7"/>
    <property type="match status" value="1"/>
</dbReference>
<dbReference type="Gene3D" id="3.30.710.10">
    <property type="entry name" value="Potassium Channel Kv1.1, Chain A"/>
    <property type="match status" value="1"/>
</dbReference>
<dbReference type="InterPro" id="IPR016897">
    <property type="entry name" value="SKP1"/>
</dbReference>
<dbReference type="InterPro" id="IPR001232">
    <property type="entry name" value="SKP1-like"/>
</dbReference>
<dbReference type="InterPro" id="IPR036296">
    <property type="entry name" value="SKP1-like_dim_sf"/>
</dbReference>
<dbReference type="InterPro" id="IPR011333">
    <property type="entry name" value="SKP1/BTB/POZ_sf"/>
</dbReference>
<dbReference type="InterPro" id="IPR016072">
    <property type="entry name" value="Skp1_comp_dimer"/>
</dbReference>
<dbReference type="InterPro" id="IPR016073">
    <property type="entry name" value="Skp1_comp_POZ"/>
</dbReference>
<dbReference type="PANTHER" id="PTHR11165">
    <property type="entry name" value="SKP1"/>
    <property type="match status" value="1"/>
</dbReference>
<dbReference type="Pfam" id="PF01466">
    <property type="entry name" value="Skp1"/>
    <property type="match status" value="1"/>
</dbReference>
<dbReference type="Pfam" id="PF03931">
    <property type="entry name" value="Skp1_POZ"/>
    <property type="match status" value="1"/>
</dbReference>
<dbReference type="PIRSF" id="PIRSF028729">
    <property type="entry name" value="E3_ubiquit_lig_SCF_Skp"/>
    <property type="match status" value="1"/>
</dbReference>
<dbReference type="SMART" id="SM00512">
    <property type="entry name" value="Skp1"/>
    <property type="match status" value="1"/>
</dbReference>
<dbReference type="SUPFAM" id="SSF54695">
    <property type="entry name" value="POZ domain"/>
    <property type="match status" value="1"/>
</dbReference>
<dbReference type="SUPFAM" id="SSF81382">
    <property type="entry name" value="Skp1 dimerisation domain-like"/>
    <property type="match status" value="1"/>
</dbReference>
<evidence type="ECO:0000250" key="1"/>
<evidence type="ECO:0000269" key="2">
    <source>
    </source>
</evidence>
<evidence type="ECO:0000269" key="3">
    <source>
    </source>
</evidence>
<evidence type="ECO:0000305" key="4"/>
<comment type="function">
    <text evidence="1">Involved in ubiquitination and subsequent proteasomal degradation of target proteins. Together with CUL1, RBX1 and a F-box protein, it forms a SCF E3 ubiquitin ligase complex. The functional specificity of this complex depends on the type of F-box protein. In the SCF complex, it serves as an adapter that links the F-box protein to CUL1 (By similarity).</text>
</comment>
<comment type="pathway">
    <text>Protein modification; protein ubiquitination.</text>
</comment>
<comment type="subunit">
    <text evidence="1 3">Part of a SCF (SKP1-cullin-F-box) protein ligase complex (By similarity). Interacts with CPR1/CPR30.</text>
</comment>
<comment type="subcellular location">
    <subcellularLocation>
        <location evidence="1">Nucleus</location>
    </subcellularLocation>
</comment>
<comment type="tissue specificity">
    <text evidence="2">Expressed in young seedlings, roots, leaves, floral stems, inflorescences, and siliques.</text>
</comment>
<comment type="similarity">
    <text evidence="4">Belongs to the SKP1 family.</text>
</comment>
<sequence>MSTKKIILKSSDGHSFEVEEEAACQCQTIAHMSEDDCTDNGIPLPEVTGKILEMVIEYCNKHHVDAANPCSDEDLKKWDKEFMEKYQSTIFDLIMAANYLNIKSLLDLACQTVADMIKDNTVEHTRKFFNIENDYTHEEEEAVRRENQWGFE</sequence>
<feature type="chain" id="PRO_0000375251" description="SKP1-like protein 10">
    <location>
        <begin position="1"/>
        <end position="152"/>
    </location>
</feature>
<feature type="region of interest" description="Interaction with the F-box domain of F-box proteins" evidence="1">
    <location>
        <begin position="94"/>
        <end position="152"/>
    </location>
</feature>
<accession>Q9LSX8</accession>
<reference key="1">
    <citation type="journal article" date="2000" name="DNA Res.">
        <title>Structural analysis of Arabidopsis thaliana chromosome 3. I. Sequence features of the regions of 4,504,864 bp covered by sixty P1 and TAC clones.</title>
        <authorList>
            <person name="Sato S."/>
            <person name="Nakamura Y."/>
            <person name="Kaneko T."/>
            <person name="Katoh T."/>
            <person name="Asamizu E."/>
            <person name="Tabata S."/>
        </authorList>
    </citation>
    <scope>NUCLEOTIDE SEQUENCE [LARGE SCALE GENOMIC DNA]</scope>
    <source>
        <strain>cv. Columbia</strain>
    </source>
</reference>
<reference key="2">
    <citation type="journal article" date="2017" name="Plant J.">
        <title>Araport11: a complete reannotation of the Arabidopsis thaliana reference genome.</title>
        <authorList>
            <person name="Cheng C.Y."/>
            <person name="Krishnakumar V."/>
            <person name="Chan A.P."/>
            <person name="Thibaud-Nissen F."/>
            <person name="Schobel S."/>
            <person name="Town C.D."/>
        </authorList>
    </citation>
    <scope>GENOME REANNOTATION</scope>
    <source>
        <strain>cv. Columbia</strain>
    </source>
</reference>
<reference key="3">
    <citation type="submission" date="2005-05" db="EMBL/GenBank/DDBJ databases">
        <authorList>
            <person name="Underwood B.A."/>
            <person name="Xiao Y.-L."/>
            <person name="Moskal W.A. Jr."/>
            <person name="Monaghan E.L."/>
            <person name="Wang W."/>
            <person name="Redman J.C."/>
            <person name="Wu H.C."/>
            <person name="Utterback T."/>
            <person name="Town C.D."/>
        </authorList>
    </citation>
    <scope>NUCLEOTIDE SEQUENCE [LARGE SCALE MRNA]</scope>
    <source>
        <strain>cv. Columbia</strain>
    </source>
</reference>
<reference key="4">
    <citation type="journal article" date="2003" name="Plant Physiol.">
        <title>Members of the Arabidopsis-SKP1-like gene family exhibit a variety of expression patterns and may play diverse roles in Arabidopsis.</title>
        <authorList>
            <person name="Zhao D."/>
            <person name="Ni W."/>
            <person name="Feng B."/>
            <person name="Han T."/>
            <person name="Petrasek M.G."/>
            <person name="Ma H."/>
        </authorList>
    </citation>
    <scope>GENE FAMILY</scope>
    <scope>NOMENCLATURE</scope>
    <scope>TISSUE SPECIFICITY</scope>
</reference>
<reference key="5">
    <citation type="journal article" date="2009" name="Plant J.">
        <title>An F-box gene, CPR30, functions as a negative regulator of the defense response in Arabidopsis.</title>
        <authorList>
            <person name="Gou M."/>
            <person name="Su N."/>
            <person name="Zheng J."/>
            <person name="Huai J."/>
            <person name="Wu G."/>
            <person name="Zhao J."/>
            <person name="He J."/>
            <person name="Tang D."/>
            <person name="Yang S."/>
            <person name="Wang G."/>
        </authorList>
    </citation>
    <scope>INTERACTION WITH CPR1/CPR30</scope>
</reference>
<name>ASK10_ARATH</name>
<organism>
    <name type="scientific">Arabidopsis thaliana</name>
    <name type="common">Mouse-ear cress</name>
    <dbReference type="NCBI Taxonomy" id="3702"/>
    <lineage>
        <taxon>Eukaryota</taxon>
        <taxon>Viridiplantae</taxon>
        <taxon>Streptophyta</taxon>
        <taxon>Embryophyta</taxon>
        <taxon>Tracheophyta</taxon>
        <taxon>Spermatophyta</taxon>
        <taxon>Magnoliopsida</taxon>
        <taxon>eudicotyledons</taxon>
        <taxon>Gunneridae</taxon>
        <taxon>Pentapetalae</taxon>
        <taxon>rosids</taxon>
        <taxon>malvids</taxon>
        <taxon>Brassicales</taxon>
        <taxon>Brassicaceae</taxon>
        <taxon>Camelineae</taxon>
        <taxon>Arabidopsis</taxon>
    </lineage>
</organism>
<proteinExistence type="evidence at protein level"/>
<protein>
    <recommendedName>
        <fullName>SKP1-like protein 10</fullName>
        <shortName>AtSK10</shortName>
    </recommendedName>
</protein>